<accession>Q034H8</accession>
<name>RPIA_LACP3</name>
<protein>
    <recommendedName>
        <fullName evidence="1">Ribose-5-phosphate isomerase A</fullName>
        <ecNumber evidence="1">5.3.1.6</ecNumber>
    </recommendedName>
    <alternativeName>
        <fullName evidence="1">Phosphoriboisomerase A</fullName>
        <shortName evidence="1">PRI</shortName>
    </alternativeName>
</protein>
<evidence type="ECO:0000255" key="1">
    <source>
        <dbReference type="HAMAP-Rule" id="MF_00170"/>
    </source>
</evidence>
<comment type="function">
    <text evidence="1">Catalyzes the reversible conversion of ribose-5-phosphate to ribulose 5-phosphate.</text>
</comment>
<comment type="catalytic activity">
    <reaction evidence="1">
        <text>aldehydo-D-ribose 5-phosphate = D-ribulose 5-phosphate</text>
        <dbReference type="Rhea" id="RHEA:14657"/>
        <dbReference type="ChEBI" id="CHEBI:58121"/>
        <dbReference type="ChEBI" id="CHEBI:58273"/>
        <dbReference type="EC" id="5.3.1.6"/>
    </reaction>
</comment>
<comment type="pathway">
    <text evidence="1">Carbohydrate degradation; pentose phosphate pathway; D-ribose 5-phosphate from D-ribulose 5-phosphate (non-oxidative stage): step 1/1.</text>
</comment>
<comment type="subunit">
    <text evidence="1">Homodimer.</text>
</comment>
<comment type="similarity">
    <text evidence="1">Belongs to the ribose 5-phosphate isomerase family.</text>
</comment>
<dbReference type="EC" id="5.3.1.6" evidence="1"/>
<dbReference type="EMBL" id="CP000423">
    <property type="protein sequence ID" value="ABJ71394.1"/>
    <property type="molecule type" value="Genomic_DNA"/>
</dbReference>
<dbReference type="RefSeq" id="WP_003567951.1">
    <property type="nucleotide sequence ID" value="NC_008526.1"/>
</dbReference>
<dbReference type="RefSeq" id="YP_807836.1">
    <property type="nucleotide sequence ID" value="NC_008526.1"/>
</dbReference>
<dbReference type="SMR" id="Q034H8"/>
<dbReference type="STRING" id="321967.LSEI_2675"/>
<dbReference type="PaxDb" id="321967-LSEI_2675"/>
<dbReference type="GeneID" id="57091266"/>
<dbReference type="KEGG" id="lca:LSEI_2675"/>
<dbReference type="PATRIC" id="fig|321967.11.peg.2619"/>
<dbReference type="HOGENOM" id="CLU_056590_1_0_9"/>
<dbReference type="UniPathway" id="UPA00115">
    <property type="reaction ID" value="UER00412"/>
</dbReference>
<dbReference type="Proteomes" id="UP000001651">
    <property type="component" value="Chromosome"/>
</dbReference>
<dbReference type="GO" id="GO:0005829">
    <property type="term" value="C:cytosol"/>
    <property type="evidence" value="ECO:0007669"/>
    <property type="project" value="TreeGrafter"/>
</dbReference>
<dbReference type="GO" id="GO:0004751">
    <property type="term" value="F:ribose-5-phosphate isomerase activity"/>
    <property type="evidence" value="ECO:0007669"/>
    <property type="project" value="UniProtKB-UniRule"/>
</dbReference>
<dbReference type="GO" id="GO:0006014">
    <property type="term" value="P:D-ribose metabolic process"/>
    <property type="evidence" value="ECO:0007669"/>
    <property type="project" value="TreeGrafter"/>
</dbReference>
<dbReference type="GO" id="GO:0009052">
    <property type="term" value="P:pentose-phosphate shunt, non-oxidative branch"/>
    <property type="evidence" value="ECO:0007669"/>
    <property type="project" value="UniProtKB-UniRule"/>
</dbReference>
<dbReference type="CDD" id="cd01398">
    <property type="entry name" value="RPI_A"/>
    <property type="match status" value="1"/>
</dbReference>
<dbReference type="FunFam" id="3.40.50.1360:FF:000001">
    <property type="entry name" value="Ribose-5-phosphate isomerase A"/>
    <property type="match status" value="1"/>
</dbReference>
<dbReference type="Gene3D" id="3.30.70.260">
    <property type="match status" value="1"/>
</dbReference>
<dbReference type="Gene3D" id="3.40.50.1360">
    <property type="match status" value="1"/>
</dbReference>
<dbReference type="HAMAP" id="MF_00170">
    <property type="entry name" value="Rib_5P_isom_A"/>
    <property type="match status" value="1"/>
</dbReference>
<dbReference type="InterPro" id="IPR037171">
    <property type="entry name" value="NagB/RpiA_transferase-like"/>
</dbReference>
<dbReference type="InterPro" id="IPR020672">
    <property type="entry name" value="Ribose5P_isomerase_typA_subgr"/>
</dbReference>
<dbReference type="InterPro" id="IPR004788">
    <property type="entry name" value="Ribose5P_isomerase_type_A"/>
</dbReference>
<dbReference type="NCBIfam" id="NF001924">
    <property type="entry name" value="PRK00702.1"/>
    <property type="match status" value="1"/>
</dbReference>
<dbReference type="NCBIfam" id="TIGR00021">
    <property type="entry name" value="rpiA"/>
    <property type="match status" value="1"/>
</dbReference>
<dbReference type="PANTHER" id="PTHR11934">
    <property type="entry name" value="RIBOSE-5-PHOSPHATE ISOMERASE"/>
    <property type="match status" value="1"/>
</dbReference>
<dbReference type="PANTHER" id="PTHR11934:SF0">
    <property type="entry name" value="RIBOSE-5-PHOSPHATE ISOMERASE"/>
    <property type="match status" value="1"/>
</dbReference>
<dbReference type="Pfam" id="PF06026">
    <property type="entry name" value="Rib_5-P_isom_A"/>
    <property type="match status" value="1"/>
</dbReference>
<dbReference type="SUPFAM" id="SSF75445">
    <property type="entry name" value="D-ribose-5-phosphate isomerase (RpiA), lid domain"/>
    <property type="match status" value="1"/>
</dbReference>
<dbReference type="SUPFAM" id="SSF100950">
    <property type="entry name" value="NagB/RpiA/CoA transferase-like"/>
    <property type="match status" value="1"/>
</dbReference>
<keyword id="KW-0413">Isomerase</keyword>
<keyword id="KW-1185">Reference proteome</keyword>
<proteinExistence type="inferred from homology"/>
<feature type="chain" id="PRO_1000016938" description="Ribose-5-phosphate isomerase A">
    <location>
        <begin position="1"/>
        <end position="229"/>
    </location>
</feature>
<feature type="active site" description="Proton acceptor" evidence="1">
    <location>
        <position position="106"/>
    </location>
</feature>
<feature type="binding site" evidence="1">
    <location>
        <begin position="28"/>
        <end position="31"/>
    </location>
    <ligand>
        <name>substrate</name>
    </ligand>
</feature>
<feature type="binding site" evidence="1">
    <location>
        <begin position="84"/>
        <end position="87"/>
    </location>
    <ligand>
        <name>substrate</name>
    </ligand>
</feature>
<feature type="binding site" evidence="1">
    <location>
        <begin position="97"/>
        <end position="100"/>
    </location>
    <ligand>
        <name>substrate</name>
    </ligand>
</feature>
<feature type="binding site" evidence="1">
    <location>
        <position position="124"/>
    </location>
    <ligand>
        <name>substrate</name>
    </ligand>
</feature>
<reference key="1">
    <citation type="journal article" date="2006" name="Proc. Natl. Acad. Sci. U.S.A.">
        <title>Comparative genomics of the lactic acid bacteria.</title>
        <authorList>
            <person name="Makarova K.S."/>
            <person name="Slesarev A."/>
            <person name="Wolf Y.I."/>
            <person name="Sorokin A."/>
            <person name="Mirkin B."/>
            <person name="Koonin E.V."/>
            <person name="Pavlov A."/>
            <person name="Pavlova N."/>
            <person name="Karamychev V."/>
            <person name="Polouchine N."/>
            <person name="Shakhova V."/>
            <person name="Grigoriev I."/>
            <person name="Lou Y."/>
            <person name="Rohksar D."/>
            <person name="Lucas S."/>
            <person name="Huang K."/>
            <person name="Goodstein D.M."/>
            <person name="Hawkins T."/>
            <person name="Plengvidhya V."/>
            <person name="Welker D."/>
            <person name="Hughes J."/>
            <person name="Goh Y."/>
            <person name="Benson A."/>
            <person name="Baldwin K."/>
            <person name="Lee J.-H."/>
            <person name="Diaz-Muniz I."/>
            <person name="Dosti B."/>
            <person name="Smeianov V."/>
            <person name="Wechter W."/>
            <person name="Barabote R."/>
            <person name="Lorca G."/>
            <person name="Altermann E."/>
            <person name="Barrangou R."/>
            <person name="Ganesan B."/>
            <person name="Xie Y."/>
            <person name="Rawsthorne H."/>
            <person name="Tamir D."/>
            <person name="Parker C."/>
            <person name="Breidt F."/>
            <person name="Broadbent J.R."/>
            <person name="Hutkins R."/>
            <person name="O'Sullivan D."/>
            <person name="Steele J."/>
            <person name="Unlu G."/>
            <person name="Saier M.H. Jr."/>
            <person name="Klaenhammer T."/>
            <person name="Richardson P."/>
            <person name="Kozyavkin S."/>
            <person name="Weimer B.C."/>
            <person name="Mills D.A."/>
        </authorList>
    </citation>
    <scope>NUCLEOTIDE SEQUENCE [LARGE SCALE GENOMIC DNA]</scope>
    <source>
        <strain>ATCC 334 / BCRC 17002 / CCUG 31169 / CIP 107868 / KCTC 3260 / NRRL B-441</strain>
    </source>
</reference>
<gene>
    <name evidence="1" type="primary">rpiA</name>
    <name type="ordered locus">LSEI_2675</name>
</gene>
<sequence>MDQNKLKQEAAQRAAEFVEDGMTIGLGTGSTVVYLVEAIAQRIKDEHLNLTGVATSVRTRKQAESLGIPMKALDEVGQIDLTIDGADEVDKHFQGIKGGGRSHLIEKIVAINSARNIWIVDETKLVDTLGKFPLPLEVIPFGSGKLLQRLADEGLKPAYRLNEDGSKALTDSKNYIIDLHLGKIEHPHLLAEWLNKQVGIVEHGLFLDLVKTVVVGTTHGPEILDAHRG</sequence>
<organism>
    <name type="scientific">Lacticaseibacillus paracasei (strain ATCC 334 / BCRC 17002 / CCUG 31169 / CIP 107868 / KCTC 3260 / NRRL B-441)</name>
    <name type="common">Lactobacillus paracasei</name>
    <dbReference type="NCBI Taxonomy" id="321967"/>
    <lineage>
        <taxon>Bacteria</taxon>
        <taxon>Bacillati</taxon>
        <taxon>Bacillota</taxon>
        <taxon>Bacilli</taxon>
        <taxon>Lactobacillales</taxon>
        <taxon>Lactobacillaceae</taxon>
        <taxon>Lacticaseibacillus</taxon>
    </lineage>
</organism>